<proteinExistence type="inferred from homology"/>
<comment type="function">
    <text evidence="1">Is involved in the reduction of 2,3-digeranylgeranylglycerophospholipids (unsaturated archaeols) into 2,3-diphytanylglycerophospholipids (saturated archaeols) in the biosynthesis of archaeal membrane lipids. Catalyzes the formation of archaetidic acid (2,3-di-O-phytanyl-sn-glyceryl phosphate) from 2,3-di-O-geranylgeranylglyceryl phosphate (DGGGP) via the hydrogenation of each double bond of the isoprenoid chains. Is also probably able to reduce double bonds of geranyl groups in CDP-2,3-bis-O-(geranylgeranyl)-sn-glycerol and archaetidylserine, thus acting at various stages in the biosynthesis of archaeal membrane lipids.</text>
</comment>
<comment type="catalytic activity">
    <reaction evidence="1">
        <text>a 2,3-bis-O-phytanyl-sn-glycerol 1-phospholipid + 8 oxidized 2[4Fe-4S]-[ferredoxin] = a 2,3-bis-O-(geranylgeranyl)-sn-glycerol 1-phospholipid + 8 reduced 2[4Fe-4S]-[ferredoxin] + 16 H(+)</text>
        <dbReference type="Rhea" id="RHEA:54324"/>
        <dbReference type="Rhea" id="RHEA-COMP:10002"/>
        <dbReference type="Rhea" id="RHEA-COMP:10004"/>
        <dbReference type="ChEBI" id="CHEBI:15378"/>
        <dbReference type="ChEBI" id="CHEBI:33722"/>
        <dbReference type="ChEBI" id="CHEBI:33723"/>
        <dbReference type="ChEBI" id="CHEBI:138139"/>
        <dbReference type="ChEBI" id="CHEBI:138140"/>
        <dbReference type="EC" id="1.3.7.11"/>
    </reaction>
    <physiologicalReaction direction="right-to-left" evidence="1">
        <dbReference type="Rhea" id="RHEA:54326"/>
    </physiologicalReaction>
</comment>
<comment type="catalytic activity">
    <reaction evidence="1">
        <text>2,3-bis-O-(phytanyl)-sn-glycerol 1-phosphate + 8 oxidized 2[4Fe-4S]-[ferredoxin] = 2,3-bis-O-(geranylgeranyl)-sn-glycerol 1-phosphate + 8 reduced 2[4Fe-4S]-[ferredoxin] + 16 H(+)</text>
        <dbReference type="Rhea" id="RHEA:36159"/>
        <dbReference type="Rhea" id="RHEA-COMP:10002"/>
        <dbReference type="Rhea" id="RHEA-COMP:10004"/>
        <dbReference type="ChEBI" id="CHEBI:15378"/>
        <dbReference type="ChEBI" id="CHEBI:33722"/>
        <dbReference type="ChEBI" id="CHEBI:33723"/>
        <dbReference type="ChEBI" id="CHEBI:58837"/>
        <dbReference type="ChEBI" id="CHEBI:73125"/>
        <dbReference type="EC" id="1.3.7.11"/>
    </reaction>
    <physiologicalReaction direction="right-to-left" evidence="1">
        <dbReference type="Rhea" id="RHEA:36161"/>
    </physiologicalReaction>
</comment>
<comment type="catalytic activity">
    <reaction evidence="1">
        <text>a 2,3-bis-O-phytanyl-sn-glycerol 1-phospholipid + 8 A = a 2,3-bis-O-(geranylgeranyl)-sn-glycerol 1-phospholipid + 8 AH2</text>
        <dbReference type="Rhea" id="RHEA:64376"/>
        <dbReference type="ChEBI" id="CHEBI:13193"/>
        <dbReference type="ChEBI" id="CHEBI:17499"/>
        <dbReference type="ChEBI" id="CHEBI:138139"/>
        <dbReference type="ChEBI" id="CHEBI:138140"/>
    </reaction>
    <physiologicalReaction direction="right-to-left" evidence="1">
        <dbReference type="Rhea" id="RHEA:64378"/>
    </physiologicalReaction>
</comment>
<comment type="catalytic activity">
    <reaction evidence="1">
        <text>CDP-2,3-bis-O-(geranylgeranyl)-sn-glycerol + 8 AH2 = CDP-2,3-bis-O-(phytanyl)-sn-glycerol + 8 A</text>
        <dbReference type="Rhea" id="RHEA:84207"/>
        <dbReference type="ChEBI" id="CHEBI:13193"/>
        <dbReference type="ChEBI" id="CHEBI:17499"/>
        <dbReference type="ChEBI" id="CHEBI:58838"/>
        <dbReference type="ChEBI" id="CHEBI:74004"/>
    </reaction>
    <physiologicalReaction direction="left-to-right" evidence="1">
        <dbReference type="Rhea" id="RHEA:84208"/>
    </physiologicalReaction>
</comment>
<comment type="catalytic activity">
    <reaction evidence="1">
        <text>archaetidylserine + 8 AH2 = 2,3-bis-O-phytanyl-sn-glycero-3-phospho-L-serine + 8 A</text>
        <dbReference type="Rhea" id="RHEA:84215"/>
        <dbReference type="ChEBI" id="CHEBI:13193"/>
        <dbReference type="ChEBI" id="CHEBI:17499"/>
        <dbReference type="ChEBI" id="CHEBI:71517"/>
        <dbReference type="ChEBI" id="CHEBI:74853"/>
    </reaction>
    <physiologicalReaction direction="left-to-right" evidence="1">
        <dbReference type="Rhea" id="RHEA:84216"/>
    </physiologicalReaction>
</comment>
<comment type="cofactor">
    <cofactor evidence="1">
        <name>FAD</name>
        <dbReference type="ChEBI" id="CHEBI:57692"/>
    </cofactor>
    <text evidence="1">Binds 1 FAD per subunit.</text>
</comment>
<comment type="pathway">
    <text evidence="1">Membrane lipid metabolism; glycerophospholipid metabolism.</text>
</comment>
<comment type="miscellaneous">
    <text evidence="1">Reduction reaction proceeds via syn addition of hydrogen for double bonds.</text>
</comment>
<comment type="similarity">
    <text evidence="1">Belongs to the geranylgeranyl reductase family. DGGGPL reductase subfamily.</text>
</comment>
<evidence type="ECO:0000255" key="1">
    <source>
        <dbReference type="HAMAP-Rule" id="MF_01287"/>
    </source>
</evidence>
<keyword id="KW-0274">FAD</keyword>
<keyword id="KW-0285">Flavoprotein</keyword>
<keyword id="KW-0444">Lipid biosynthesis</keyword>
<keyword id="KW-0443">Lipid metabolism</keyword>
<keyword id="KW-0560">Oxidoreductase</keyword>
<keyword id="KW-0594">Phospholipid biosynthesis</keyword>
<keyword id="KW-1208">Phospholipid metabolism</keyword>
<keyword id="KW-1185">Reference proteome</keyword>
<organism>
    <name type="scientific">Methanothrix thermoacetophila (strain DSM 6194 / JCM 14653 / NBRC 101360 / PT)</name>
    <name type="common">Methanosaeta thermophila</name>
    <dbReference type="NCBI Taxonomy" id="349307"/>
    <lineage>
        <taxon>Archaea</taxon>
        <taxon>Methanobacteriati</taxon>
        <taxon>Methanobacteriota</taxon>
        <taxon>Stenosarchaea group</taxon>
        <taxon>Methanomicrobia</taxon>
        <taxon>Methanotrichales</taxon>
        <taxon>Methanotrichaceae</taxon>
        <taxon>Methanothrix</taxon>
    </lineage>
</organism>
<sequence length="391" mass="42335">MRCDVVVVGAGPGGSMAAKTAAEKGLKVVLVEKRQEIGDPVRCAEGVSKARLSSMIKPDPKWIASEVKGARLYAPDGSNVVMSEDKSGDEVGYVLERKIFDRALAMDAARAGARVMVKTRALDLLRANGSVKGIRAMRYGEIIDIEADVVIGADGVESKVGRWAGIDTALKPGDIEVCAQFLLYDKGIDDEYCEFFLGNELAPGGYVWSFPKGEHLANVGLGVIGSRSEPGAPVKLLRRFVERRMPEARIVEMVVGGVPVSGPIERTIADGVMLVGDAARQSDPITGGGILNAMQAGMIAGEVVADAVSSGDTGVEGLMAYEKRWRESIGKQIARHLDLKEFFIRLSDDDLNKLMHSIQSEDVSKMDLRGMLRVLIRLNPKMLWELRHLVM</sequence>
<gene>
    <name type="ordered locus">Mthe_0044</name>
</gene>
<feature type="chain" id="PRO_0000351472" description="Digeranylgeranylglycerophospholipid reductase">
    <location>
        <begin position="1"/>
        <end position="391"/>
    </location>
</feature>
<feature type="binding site" evidence="1">
    <location>
        <position position="13"/>
    </location>
    <ligand>
        <name>FAD</name>
        <dbReference type="ChEBI" id="CHEBI:57692"/>
    </ligand>
</feature>
<feature type="binding site" evidence="1">
    <location>
        <position position="32"/>
    </location>
    <ligand>
        <name>FAD</name>
        <dbReference type="ChEBI" id="CHEBI:57692"/>
    </ligand>
</feature>
<feature type="binding site" evidence="1">
    <location>
        <position position="43"/>
    </location>
    <ligand>
        <name>FAD</name>
        <dbReference type="ChEBI" id="CHEBI:57692"/>
    </ligand>
</feature>
<feature type="binding site" evidence="1">
    <location>
        <position position="44"/>
    </location>
    <ligand>
        <name>FAD</name>
        <dbReference type="ChEBI" id="CHEBI:57692"/>
    </ligand>
</feature>
<feature type="binding site" evidence="1">
    <location>
        <position position="46"/>
    </location>
    <ligand>
        <name>FAD</name>
        <dbReference type="ChEBI" id="CHEBI:57692"/>
    </ligand>
</feature>
<feature type="binding site" evidence="1">
    <location>
        <position position="97"/>
    </location>
    <ligand>
        <name>FAD</name>
        <dbReference type="ChEBI" id="CHEBI:57692"/>
    </ligand>
</feature>
<feature type="binding site" evidence="1">
    <location>
        <position position="121"/>
    </location>
    <ligand>
        <name>FAD</name>
        <dbReference type="ChEBI" id="CHEBI:57692"/>
    </ligand>
</feature>
<feature type="binding site" evidence="1">
    <location>
        <position position="277"/>
    </location>
    <ligand>
        <name>FAD</name>
        <dbReference type="ChEBI" id="CHEBI:57692"/>
    </ligand>
</feature>
<feature type="binding site" evidence="1">
    <location>
        <position position="289"/>
    </location>
    <ligand>
        <name>FAD</name>
        <dbReference type="ChEBI" id="CHEBI:57692"/>
    </ligand>
</feature>
<feature type="binding site" evidence="1">
    <location>
        <position position="290"/>
    </location>
    <ligand>
        <name>FAD</name>
        <dbReference type="ChEBI" id="CHEBI:57692"/>
    </ligand>
</feature>
<dbReference type="EC" id="1.3.7.11" evidence="1"/>
<dbReference type="EMBL" id="CP000477">
    <property type="protein sequence ID" value="ABK13847.1"/>
    <property type="molecule type" value="Genomic_DNA"/>
</dbReference>
<dbReference type="RefSeq" id="WP_011695248.1">
    <property type="nucleotide sequence ID" value="NC_008553.1"/>
</dbReference>
<dbReference type="SMR" id="A0B573"/>
<dbReference type="STRING" id="349307.Mthe_0044"/>
<dbReference type="GeneID" id="4462736"/>
<dbReference type="KEGG" id="mtp:Mthe_0044"/>
<dbReference type="HOGENOM" id="CLU_024648_0_0_2"/>
<dbReference type="OrthoDB" id="6062at2157"/>
<dbReference type="UniPathway" id="UPA00940"/>
<dbReference type="Proteomes" id="UP000000674">
    <property type="component" value="Chromosome"/>
</dbReference>
<dbReference type="GO" id="GO:0016020">
    <property type="term" value="C:membrane"/>
    <property type="evidence" value="ECO:0007669"/>
    <property type="project" value="GOC"/>
</dbReference>
<dbReference type="GO" id="GO:0071949">
    <property type="term" value="F:FAD binding"/>
    <property type="evidence" value="ECO:0007669"/>
    <property type="project" value="InterPro"/>
</dbReference>
<dbReference type="GO" id="GO:0045550">
    <property type="term" value="F:geranylgeranyl reductase activity"/>
    <property type="evidence" value="ECO:0007669"/>
    <property type="project" value="InterPro"/>
</dbReference>
<dbReference type="GO" id="GO:0016636">
    <property type="term" value="F:oxidoreductase activity, acting on the CH-CH group of donors, iron-sulfur protein as acceptor"/>
    <property type="evidence" value="ECO:0007669"/>
    <property type="project" value="UniProtKB-UniRule"/>
</dbReference>
<dbReference type="GO" id="GO:0016628">
    <property type="term" value="F:oxidoreductase activity, acting on the CH-CH group of donors, NAD or NADP as acceptor"/>
    <property type="evidence" value="ECO:0007669"/>
    <property type="project" value="InterPro"/>
</dbReference>
<dbReference type="GO" id="GO:0046474">
    <property type="term" value="P:glycerophospholipid biosynthetic process"/>
    <property type="evidence" value="ECO:0007669"/>
    <property type="project" value="UniProtKB-UniRule"/>
</dbReference>
<dbReference type="GO" id="GO:0046467">
    <property type="term" value="P:membrane lipid biosynthetic process"/>
    <property type="evidence" value="ECO:0007669"/>
    <property type="project" value="InterPro"/>
</dbReference>
<dbReference type="Gene3D" id="3.30.9.10">
    <property type="entry name" value="D-Amino Acid Oxidase, subunit A, domain 2"/>
    <property type="match status" value="1"/>
</dbReference>
<dbReference type="Gene3D" id="3.50.50.60">
    <property type="entry name" value="FAD/NAD(P)-binding domain"/>
    <property type="match status" value="1"/>
</dbReference>
<dbReference type="HAMAP" id="MF_01287">
    <property type="entry name" value="DGGGPL_reductase"/>
    <property type="match status" value="1"/>
</dbReference>
<dbReference type="InterPro" id="IPR023590">
    <property type="entry name" value="DGGGPL_reductase"/>
</dbReference>
<dbReference type="InterPro" id="IPR002938">
    <property type="entry name" value="FAD-bd"/>
</dbReference>
<dbReference type="InterPro" id="IPR036188">
    <property type="entry name" value="FAD/NAD-bd_sf"/>
</dbReference>
<dbReference type="InterPro" id="IPR011777">
    <property type="entry name" value="Geranylgeranyl_Rdtase_fam"/>
</dbReference>
<dbReference type="InterPro" id="IPR050407">
    <property type="entry name" value="Geranylgeranyl_reductase"/>
</dbReference>
<dbReference type="InterPro" id="IPR054715">
    <property type="entry name" value="GGR_cat"/>
</dbReference>
<dbReference type="NCBIfam" id="TIGR02032">
    <property type="entry name" value="GG-red-SF"/>
    <property type="match status" value="1"/>
</dbReference>
<dbReference type="PANTHER" id="PTHR42685:SF18">
    <property type="entry name" value="DIGERANYLGERANYLGLYCEROPHOSPHOLIPID REDUCTASE"/>
    <property type="match status" value="1"/>
</dbReference>
<dbReference type="PANTHER" id="PTHR42685">
    <property type="entry name" value="GERANYLGERANYL DIPHOSPHATE REDUCTASE"/>
    <property type="match status" value="1"/>
</dbReference>
<dbReference type="Pfam" id="PF01494">
    <property type="entry name" value="FAD_binding_3"/>
    <property type="match status" value="1"/>
</dbReference>
<dbReference type="Pfam" id="PF22578">
    <property type="entry name" value="GGR_cat"/>
    <property type="match status" value="1"/>
</dbReference>
<dbReference type="PRINTS" id="PR00420">
    <property type="entry name" value="RNGMNOXGNASE"/>
</dbReference>
<dbReference type="SUPFAM" id="SSF51905">
    <property type="entry name" value="FAD/NAD(P)-binding domain"/>
    <property type="match status" value="1"/>
</dbReference>
<accession>A0B573</accession>
<reference key="1">
    <citation type="submission" date="2006-10" db="EMBL/GenBank/DDBJ databases">
        <title>Complete sequence of Methanosaeta thermophila PT.</title>
        <authorList>
            <consortium name="US DOE Joint Genome Institute"/>
            <person name="Copeland A."/>
            <person name="Lucas S."/>
            <person name="Lapidus A."/>
            <person name="Barry K."/>
            <person name="Detter J.C."/>
            <person name="Glavina del Rio T."/>
            <person name="Hammon N."/>
            <person name="Israni S."/>
            <person name="Pitluck S."/>
            <person name="Chain P."/>
            <person name="Malfatti S."/>
            <person name="Shin M."/>
            <person name="Vergez L."/>
            <person name="Schmutz J."/>
            <person name="Larimer F."/>
            <person name="Land M."/>
            <person name="Hauser L."/>
            <person name="Kyrpides N."/>
            <person name="Kim E."/>
            <person name="Smith K.S."/>
            <person name="Ingram-Smith C."/>
            <person name="Richardson P."/>
        </authorList>
    </citation>
    <scope>NUCLEOTIDE SEQUENCE [LARGE SCALE GENOMIC DNA]</scope>
    <source>
        <strain>DSM 6194 / JCM 14653 / NBRC 101360 / PT</strain>
    </source>
</reference>
<protein>
    <recommendedName>
        <fullName evidence="1">Digeranylgeranylglycerophospholipid reductase</fullName>
        <shortName evidence="1">DGGGPL reductase</shortName>
        <ecNumber evidence="1">1.3.7.11</ecNumber>
    </recommendedName>
    <alternativeName>
        <fullName evidence="1">2,3-bis-O-geranylgeranylglyceryl phosphate reductase</fullName>
    </alternativeName>
    <alternativeName>
        <fullName evidence="1">Geranylgeranyl reductase</fullName>
        <shortName evidence="1">GGR</shortName>
    </alternativeName>
</protein>
<name>GGR_METTP</name>